<name>RSMG_AZOSB</name>
<evidence type="ECO:0000255" key="1">
    <source>
        <dbReference type="HAMAP-Rule" id="MF_00074"/>
    </source>
</evidence>
<keyword id="KW-0963">Cytoplasm</keyword>
<keyword id="KW-0489">Methyltransferase</keyword>
<keyword id="KW-1185">Reference proteome</keyword>
<keyword id="KW-0698">rRNA processing</keyword>
<keyword id="KW-0949">S-adenosyl-L-methionine</keyword>
<keyword id="KW-0808">Transferase</keyword>
<dbReference type="EC" id="2.1.1.170" evidence="1"/>
<dbReference type="EMBL" id="AM406670">
    <property type="protein sequence ID" value="CAL92760.1"/>
    <property type="molecule type" value="Genomic_DNA"/>
</dbReference>
<dbReference type="RefSeq" id="WP_011763879.1">
    <property type="nucleotide sequence ID" value="NC_008702.1"/>
</dbReference>
<dbReference type="SMR" id="A1K1Q5"/>
<dbReference type="STRING" id="62928.azo0142"/>
<dbReference type="KEGG" id="azo:azo0142"/>
<dbReference type="eggNOG" id="COG0357">
    <property type="taxonomic scope" value="Bacteria"/>
</dbReference>
<dbReference type="HOGENOM" id="CLU_065341_2_0_4"/>
<dbReference type="Proteomes" id="UP000002588">
    <property type="component" value="Chromosome"/>
</dbReference>
<dbReference type="GO" id="GO:0005829">
    <property type="term" value="C:cytosol"/>
    <property type="evidence" value="ECO:0007669"/>
    <property type="project" value="TreeGrafter"/>
</dbReference>
<dbReference type="GO" id="GO:0070043">
    <property type="term" value="F:rRNA (guanine-N7-)-methyltransferase activity"/>
    <property type="evidence" value="ECO:0007669"/>
    <property type="project" value="UniProtKB-UniRule"/>
</dbReference>
<dbReference type="Gene3D" id="3.40.50.150">
    <property type="entry name" value="Vaccinia Virus protein VP39"/>
    <property type="match status" value="1"/>
</dbReference>
<dbReference type="HAMAP" id="MF_00074">
    <property type="entry name" value="16SrRNA_methyltr_G"/>
    <property type="match status" value="1"/>
</dbReference>
<dbReference type="InterPro" id="IPR003682">
    <property type="entry name" value="rRNA_ssu_MeTfrase_G"/>
</dbReference>
<dbReference type="InterPro" id="IPR029063">
    <property type="entry name" value="SAM-dependent_MTases_sf"/>
</dbReference>
<dbReference type="NCBIfam" id="TIGR00138">
    <property type="entry name" value="rsmG_gidB"/>
    <property type="match status" value="1"/>
</dbReference>
<dbReference type="PANTHER" id="PTHR31760">
    <property type="entry name" value="S-ADENOSYL-L-METHIONINE-DEPENDENT METHYLTRANSFERASES SUPERFAMILY PROTEIN"/>
    <property type="match status" value="1"/>
</dbReference>
<dbReference type="PANTHER" id="PTHR31760:SF0">
    <property type="entry name" value="S-ADENOSYL-L-METHIONINE-DEPENDENT METHYLTRANSFERASES SUPERFAMILY PROTEIN"/>
    <property type="match status" value="1"/>
</dbReference>
<dbReference type="Pfam" id="PF02527">
    <property type="entry name" value="GidB"/>
    <property type="match status" value="1"/>
</dbReference>
<dbReference type="PIRSF" id="PIRSF003078">
    <property type="entry name" value="GidB"/>
    <property type="match status" value="1"/>
</dbReference>
<dbReference type="SUPFAM" id="SSF53335">
    <property type="entry name" value="S-adenosyl-L-methionine-dependent methyltransferases"/>
    <property type="match status" value="1"/>
</dbReference>
<protein>
    <recommendedName>
        <fullName evidence="1">Ribosomal RNA small subunit methyltransferase G</fullName>
        <ecNumber evidence="1">2.1.1.170</ecNumber>
    </recommendedName>
    <alternativeName>
        <fullName evidence="1">16S rRNA 7-methylguanosine methyltransferase</fullName>
        <shortName evidence="1">16S rRNA m7G methyltransferase</shortName>
    </alternativeName>
</protein>
<feature type="chain" id="PRO_0000335309" description="Ribosomal RNA small subunit methyltransferase G">
    <location>
        <begin position="1"/>
        <end position="212"/>
    </location>
</feature>
<feature type="binding site" evidence="1">
    <location>
        <position position="80"/>
    </location>
    <ligand>
        <name>S-adenosyl-L-methionine</name>
        <dbReference type="ChEBI" id="CHEBI:59789"/>
    </ligand>
</feature>
<feature type="binding site" evidence="1">
    <location>
        <position position="85"/>
    </location>
    <ligand>
        <name>S-adenosyl-L-methionine</name>
        <dbReference type="ChEBI" id="CHEBI:59789"/>
    </ligand>
</feature>
<feature type="binding site" evidence="1">
    <location>
        <begin position="131"/>
        <end position="132"/>
    </location>
    <ligand>
        <name>S-adenosyl-L-methionine</name>
        <dbReference type="ChEBI" id="CHEBI:59789"/>
    </ligand>
</feature>
<feature type="binding site" evidence="1">
    <location>
        <position position="146"/>
    </location>
    <ligand>
        <name>S-adenosyl-L-methionine</name>
        <dbReference type="ChEBI" id="CHEBI:59789"/>
    </ligand>
</feature>
<accession>A1K1Q5</accession>
<comment type="function">
    <text evidence="1">Specifically methylates the N7 position of guanine in position 527 of 16S rRNA.</text>
</comment>
<comment type="catalytic activity">
    <reaction evidence="1">
        <text>guanosine(527) in 16S rRNA + S-adenosyl-L-methionine = N(7)-methylguanosine(527) in 16S rRNA + S-adenosyl-L-homocysteine</text>
        <dbReference type="Rhea" id="RHEA:42732"/>
        <dbReference type="Rhea" id="RHEA-COMP:10209"/>
        <dbReference type="Rhea" id="RHEA-COMP:10210"/>
        <dbReference type="ChEBI" id="CHEBI:57856"/>
        <dbReference type="ChEBI" id="CHEBI:59789"/>
        <dbReference type="ChEBI" id="CHEBI:74269"/>
        <dbReference type="ChEBI" id="CHEBI:74480"/>
        <dbReference type="EC" id="2.1.1.170"/>
    </reaction>
</comment>
<comment type="subcellular location">
    <subcellularLocation>
        <location evidence="1">Cytoplasm</location>
    </subcellularLocation>
</comment>
<comment type="similarity">
    <text evidence="1">Belongs to the methyltransferase superfamily. RNA methyltransferase RsmG family.</text>
</comment>
<sequence length="212" mass="22464">MSVLTPYAGRLADGIAALGLDIPTATQARLIAFGELLLKWNKVYNLTAIRAPQEVITHHLLDSLAVLPYLSAVTRLADIGSGGGLPGIPLAIVRPELSVISVETVNKKASFQQQAKIELGLGNFQPLNARVENLKPEQPCDGVISRAFSSLKDFVELSGHLVGDGGALYAMKGVRPDDEVAALPAGWTVRATHPLAVPGLDAERHLLVIARG</sequence>
<proteinExistence type="inferred from homology"/>
<organism>
    <name type="scientific">Azoarcus sp. (strain BH72)</name>
    <dbReference type="NCBI Taxonomy" id="418699"/>
    <lineage>
        <taxon>Bacteria</taxon>
        <taxon>Pseudomonadati</taxon>
        <taxon>Pseudomonadota</taxon>
        <taxon>Betaproteobacteria</taxon>
        <taxon>Rhodocyclales</taxon>
        <taxon>Zoogloeaceae</taxon>
        <taxon>Azoarcus</taxon>
    </lineage>
</organism>
<reference key="1">
    <citation type="journal article" date="2006" name="Nat. Biotechnol.">
        <title>Complete genome of the mutualistic, N2-fixing grass endophyte Azoarcus sp. strain BH72.</title>
        <authorList>
            <person name="Krause A."/>
            <person name="Ramakumar A."/>
            <person name="Bartels D."/>
            <person name="Battistoni F."/>
            <person name="Bekel T."/>
            <person name="Boch J."/>
            <person name="Boehm M."/>
            <person name="Friedrich F."/>
            <person name="Hurek T."/>
            <person name="Krause L."/>
            <person name="Linke B."/>
            <person name="McHardy A.C."/>
            <person name="Sarkar A."/>
            <person name="Schneiker S."/>
            <person name="Syed A.A."/>
            <person name="Thauer R."/>
            <person name="Vorhoelter F.-J."/>
            <person name="Weidner S."/>
            <person name="Puehler A."/>
            <person name="Reinhold-Hurek B."/>
            <person name="Kaiser O."/>
            <person name="Goesmann A."/>
        </authorList>
    </citation>
    <scope>NUCLEOTIDE SEQUENCE [LARGE SCALE GENOMIC DNA]</scope>
    <source>
        <strain>BH72</strain>
    </source>
</reference>
<gene>
    <name evidence="1" type="primary">rsmG</name>
    <name type="ordered locus">azo0142</name>
</gene>